<reference key="1">
    <citation type="journal article" date="2005" name="Science">
        <title>The transcriptional landscape of the mammalian genome.</title>
        <authorList>
            <person name="Carninci P."/>
            <person name="Kasukawa T."/>
            <person name="Katayama S."/>
            <person name="Gough J."/>
            <person name="Frith M.C."/>
            <person name="Maeda N."/>
            <person name="Oyama R."/>
            <person name="Ravasi T."/>
            <person name="Lenhard B."/>
            <person name="Wells C."/>
            <person name="Kodzius R."/>
            <person name="Shimokawa K."/>
            <person name="Bajic V.B."/>
            <person name="Brenner S.E."/>
            <person name="Batalov S."/>
            <person name="Forrest A.R."/>
            <person name="Zavolan M."/>
            <person name="Davis M.J."/>
            <person name="Wilming L.G."/>
            <person name="Aidinis V."/>
            <person name="Allen J.E."/>
            <person name="Ambesi-Impiombato A."/>
            <person name="Apweiler R."/>
            <person name="Aturaliya R.N."/>
            <person name="Bailey T.L."/>
            <person name="Bansal M."/>
            <person name="Baxter L."/>
            <person name="Beisel K.W."/>
            <person name="Bersano T."/>
            <person name="Bono H."/>
            <person name="Chalk A.M."/>
            <person name="Chiu K.P."/>
            <person name="Choudhary V."/>
            <person name="Christoffels A."/>
            <person name="Clutterbuck D.R."/>
            <person name="Crowe M.L."/>
            <person name="Dalla E."/>
            <person name="Dalrymple B.P."/>
            <person name="de Bono B."/>
            <person name="Della Gatta G."/>
            <person name="di Bernardo D."/>
            <person name="Down T."/>
            <person name="Engstrom P."/>
            <person name="Fagiolini M."/>
            <person name="Faulkner G."/>
            <person name="Fletcher C.F."/>
            <person name="Fukushima T."/>
            <person name="Furuno M."/>
            <person name="Futaki S."/>
            <person name="Gariboldi M."/>
            <person name="Georgii-Hemming P."/>
            <person name="Gingeras T.R."/>
            <person name="Gojobori T."/>
            <person name="Green R.E."/>
            <person name="Gustincich S."/>
            <person name="Harbers M."/>
            <person name="Hayashi Y."/>
            <person name="Hensch T.K."/>
            <person name="Hirokawa N."/>
            <person name="Hill D."/>
            <person name="Huminiecki L."/>
            <person name="Iacono M."/>
            <person name="Ikeo K."/>
            <person name="Iwama A."/>
            <person name="Ishikawa T."/>
            <person name="Jakt M."/>
            <person name="Kanapin A."/>
            <person name="Katoh M."/>
            <person name="Kawasawa Y."/>
            <person name="Kelso J."/>
            <person name="Kitamura H."/>
            <person name="Kitano H."/>
            <person name="Kollias G."/>
            <person name="Krishnan S.P."/>
            <person name="Kruger A."/>
            <person name="Kummerfeld S.K."/>
            <person name="Kurochkin I.V."/>
            <person name="Lareau L.F."/>
            <person name="Lazarevic D."/>
            <person name="Lipovich L."/>
            <person name="Liu J."/>
            <person name="Liuni S."/>
            <person name="McWilliam S."/>
            <person name="Madan Babu M."/>
            <person name="Madera M."/>
            <person name="Marchionni L."/>
            <person name="Matsuda H."/>
            <person name="Matsuzawa S."/>
            <person name="Miki H."/>
            <person name="Mignone F."/>
            <person name="Miyake S."/>
            <person name="Morris K."/>
            <person name="Mottagui-Tabar S."/>
            <person name="Mulder N."/>
            <person name="Nakano N."/>
            <person name="Nakauchi H."/>
            <person name="Ng P."/>
            <person name="Nilsson R."/>
            <person name="Nishiguchi S."/>
            <person name="Nishikawa S."/>
            <person name="Nori F."/>
            <person name="Ohara O."/>
            <person name="Okazaki Y."/>
            <person name="Orlando V."/>
            <person name="Pang K.C."/>
            <person name="Pavan W.J."/>
            <person name="Pavesi G."/>
            <person name="Pesole G."/>
            <person name="Petrovsky N."/>
            <person name="Piazza S."/>
            <person name="Reed J."/>
            <person name="Reid J.F."/>
            <person name="Ring B.Z."/>
            <person name="Ringwald M."/>
            <person name="Rost B."/>
            <person name="Ruan Y."/>
            <person name="Salzberg S.L."/>
            <person name="Sandelin A."/>
            <person name="Schneider C."/>
            <person name="Schoenbach C."/>
            <person name="Sekiguchi K."/>
            <person name="Semple C.A."/>
            <person name="Seno S."/>
            <person name="Sessa L."/>
            <person name="Sheng Y."/>
            <person name="Shibata Y."/>
            <person name="Shimada H."/>
            <person name="Shimada K."/>
            <person name="Silva D."/>
            <person name="Sinclair B."/>
            <person name="Sperling S."/>
            <person name="Stupka E."/>
            <person name="Sugiura K."/>
            <person name="Sultana R."/>
            <person name="Takenaka Y."/>
            <person name="Taki K."/>
            <person name="Tammoja K."/>
            <person name="Tan S.L."/>
            <person name="Tang S."/>
            <person name="Taylor M.S."/>
            <person name="Tegner J."/>
            <person name="Teichmann S.A."/>
            <person name="Ueda H.R."/>
            <person name="van Nimwegen E."/>
            <person name="Verardo R."/>
            <person name="Wei C.L."/>
            <person name="Yagi K."/>
            <person name="Yamanishi H."/>
            <person name="Zabarovsky E."/>
            <person name="Zhu S."/>
            <person name="Zimmer A."/>
            <person name="Hide W."/>
            <person name="Bult C."/>
            <person name="Grimmond S.M."/>
            <person name="Teasdale R.D."/>
            <person name="Liu E.T."/>
            <person name="Brusic V."/>
            <person name="Quackenbush J."/>
            <person name="Wahlestedt C."/>
            <person name="Mattick J.S."/>
            <person name="Hume D.A."/>
            <person name="Kai C."/>
            <person name="Sasaki D."/>
            <person name="Tomaru Y."/>
            <person name="Fukuda S."/>
            <person name="Kanamori-Katayama M."/>
            <person name="Suzuki M."/>
            <person name="Aoki J."/>
            <person name="Arakawa T."/>
            <person name="Iida J."/>
            <person name="Imamura K."/>
            <person name="Itoh M."/>
            <person name="Kato T."/>
            <person name="Kawaji H."/>
            <person name="Kawagashira N."/>
            <person name="Kawashima T."/>
            <person name="Kojima M."/>
            <person name="Kondo S."/>
            <person name="Konno H."/>
            <person name="Nakano K."/>
            <person name="Ninomiya N."/>
            <person name="Nishio T."/>
            <person name="Okada M."/>
            <person name="Plessy C."/>
            <person name="Shibata K."/>
            <person name="Shiraki T."/>
            <person name="Suzuki S."/>
            <person name="Tagami M."/>
            <person name="Waki K."/>
            <person name="Watahiki A."/>
            <person name="Okamura-Oho Y."/>
            <person name="Suzuki H."/>
            <person name="Kawai J."/>
            <person name="Hayashizaki Y."/>
        </authorList>
    </citation>
    <scope>NUCLEOTIDE SEQUENCE [LARGE SCALE MRNA]</scope>
    <source>
        <strain>C57BL/6J</strain>
        <tissue>Head</tissue>
        <tissue>Skin</tissue>
    </source>
</reference>
<reference key="2">
    <citation type="journal article" date="2004" name="Genome Res.">
        <title>The status, quality, and expansion of the NIH full-length cDNA project: the Mammalian Gene Collection (MGC).</title>
        <authorList>
            <consortium name="The MGC Project Team"/>
        </authorList>
    </citation>
    <scope>NUCLEOTIDE SEQUENCE [LARGE SCALE MRNA]</scope>
    <source>
        <strain>C57BL/6J</strain>
        <tissue>Embryo</tissue>
    </source>
</reference>
<reference key="3">
    <citation type="journal article" date="2019" name="J. Clin. Med.">
        <title>ADCK2 Haploinsufficiency Reduces Mitochondrial Lipid Oxidation and Causes Myopathy Associated with CoQ Deficiency.</title>
        <authorList>
            <person name="Vazquez-Fonseca L."/>
            <person name="Schaefer J."/>
            <person name="Navas-Enamorado I."/>
            <person name="Santos-Ocana C."/>
            <person name="Hernandez-Camacho J.D."/>
            <person name="Guerra I."/>
            <person name="Cascajo M.V."/>
            <person name="Sanchez-Cuesta A."/>
            <person name="Horvath Z."/>
            <person name="Siendones E."/>
            <person name="Jou C."/>
            <person name="Casado M."/>
            <person name="Gutierrez P."/>
            <person name="Brea-Calvo G."/>
            <person name="Lopez-Lluch G."/>
            <person name="Fernandez-Ayala D.J.M."/>
            <person name="Cortes-Rodriguez A.B."/>
            <person name="Rodriguez-Aguilera J.C."/>
            <person name="Matte C."/>
            <person name="Ribes A."/>
            <person name="Prieto-Soler S.Y."/>
            <person name="Dominguez-Del-Toro E."/>
            <person name="Francesco A.D."/>
            <person name="Aon M.A."/>
            <person name="Bernier M."/>
            <person name="Salviati L."/>
            <person name="Artuch R."/>
            <person name="Cabo R."/>
            <person name="Jackson S."/>
            <person name="Navas P."/>
        </authorList>
    </citation>
    <scope>FUNCTION</scope>
    <scope>DISRUPTION PHENOTYPE</scope>
    <scope>SUBCELLULAR LOCATION</scope>
</reference>
<reference key="4">
    <citation type="journal article" date="2022" name="Front. Physiol.">
        <title>Calorie Restriction Rescues Mitochondrial Dysfunction in Adck2-Deficient Skeletal Muscle.</title>
        <authorList>
            <person name="Hernandez-Camacho J.D."/>
            <person name="Fernandez-Ayala D.J.M."/>
            <person name="Vicente-Garcia C."/>
            <person name="Navas-Enamorado I."/>
            <person name="Lopez-Lluch G."/>
            <person name="Oliva C."/>
            <person name="Artuch R."/>
            <person name="Garcia-Villoria J."/>
            <person name="Ribes A."/>
            <person name="de Cabo R."/>
            <person name="Carvajal J.J."/>
            <person name="Navas P."/>
        </authorList>
    </citation>
    <scope>FUNCTION</scope>
    <scope>DISRUPTION PHENOTYPE</scope>
</reference>
<accession>Q6NSR3</accession>
<accession>Q3TTS5</accession>
<accession>Q8BHC6</accession>
<evidence type="ECO:0000250" key="1"/>
<evidence type="ECO:0000255" key="2"/>
<evidence type="ECO:0000269" key="3">
    <source>
    </source>
</evidence>
<evidence type="ECO:0000269" key="4">
    <source>
    </source>
</evidence>
<evidence type="ECO:0000305" key="5"/>
<comment type="function">
    <text evidence="3 4 5">The function of this protein is not yet clear. It is not known if it has protein kinase activity and what type of substrate it would phosphorylate (Ser, Thr or Tyr) (Probable). Involved in the mitochondrial import of CoQ precursors, plays a role in muscle mitochondrial function and fatty acid beta-oxidation (PubMed:31480808, PubMed:35936917).</text>
</comment>
<comment type="subcellular location">
    <subcellularLocation>
        <location evidence="3">Mitochondrion</location>
    </subcellularLocation>
    <subcellularLocation>
        <location evidence="2">Membrane</location>
        <topology evidence="2">Single-pass membrane protein</topology>
    </subcellularLocation>
</comment>
<comment type="disruption phenotype">
    <text evidence="3 4">Heterozygous knockout mouse show locomotor dysfunction with increases in plasma lactate and accumulation of organic acids in the urine. They show an unaltered nociceptive information and emotional response (PubMed:31480808). Heterozygous knockout mouse treated with long-term caloric restriction recover overall glucose and lipid homeostasis, have enhanced physical activity, increased mitochondrial function and aerobic metabolism in skeletal muscle (PubMed:35936917).</text>
</comment>
<comment type="similarity">
    <text evidence="5">Belongs to the protein kinase superfamily. ADCK protein kinase family.</text>
</comment>
<proteinExistence type="evidence at transcript level"/>
<feature type="chain" id="PRO_0000271793" description="Uncharacterized aarF domain-containing protein kinase 2">
    <location>
        <begin position="1"/>
        <end position="617"/>
    </location>
</feature>
<feature type="transmembrane region" description="Helical" evidence="2">
    <location>
        <begin position="103"/>
        <end position="123"/>
    </location>
</feature>
<feature type="domain" description="Protein kinase">
    <location>
        <begin position="200"/>
        <end position="609"/>
    </location>
</feature>
<feature type="active site" description="Proton acceptor" evidence="1">
    <location>
        <position position="436"/>
    </location>
</feature>
<feature type="binding site" evidence="1">
    <location>
        <begin position="206"/>
        <end position="214"/>
    </location>
    <ligand>
        <name>ATP</name>
        <dbReference type="ChEBI" id="CHEBI:30616"/>
    </ligand>
</feature>
<feature type="binding site" evidence="1">
    <location>
        <position position="302"/>
    </location>
    <ligand>
        <name>ATP</name>
        <dbReference type="ChEBI" id="CHEBI:30616"/>
    </ligand>
</feature>
<feature type="sequence conflict" description="In Ref. 1; BAE36249." evidence="5" ref="1">
    <original>E</original>
    <variation>K</variation>
    <location>
        <position position="342"/>
    </location>
</feature>
<feature type="sequence conflict" description="In Ref. 1; BAC26008/BAC26013/BAE36249." evidence="5" ref="1">
    <original>R</original>
    <variation>K</variation>
    <location>
        <position position="528"/>
    </location>
</feature>
<sequence>MVTPWRLSVRVCLSHLRCFEFRKELGHSRPLGCSRNARLCWFLLGTLPKLISAHGSVGEGAPGSLCQRKTHWSDLAENGLVEKVAQEGPLARVLLCLRLGLRAGVLLAKFFPLLFLYPLTYLAPGLSTLWLHLLFKATETSGPTYIKLGQWASTRRDLFSEAFCTQFSKLHVQVTPHPWARTEYLLQQAFGEDWGSLLFFETREPVGSGCVAQVYKAFASISLLEEDRIWRLGELSAPGTRAVVMQREPFMKDRKPSENLADEAFLEKLLLPKADLGGSEVGVSQAPWHLPKSDHLIPVAVKVLHPGLLSQVSMDLLLMKIGSKALGLLPGVKWLSLPEIVEEFEKLMVQQTDLRYEAQNLEHFQHNFQDMASVKFPTPLRPLITRDILVETYEESVPVSSYQQAGIPTDLKRKIAQLGINMLLKMIFVDNFVHGDLHPGNILVQGADGVSPSLEMQQQQVNVCDTLVATIAPALCPLRLVLLDAGIVAKLQASDLRNFRAVFQAVVMGQGHRVAELMLHHAQANECRDVERFKAEMATLVTQARKNIVTLEKLHVSSLLSSVFKLLMTHKVKLESNFASIVVAIMVLEGLGRSLDPTLDILEAAKPFLFKGPASFL</sequence>
<dbReference type="EC" id="2.7.11.-"/>
<dbReference type="EMBL" id="AK028557">
    <property type="protein sequence ID" value="BAC26008.1"/>
    <property type="molecule type" value="mRNA"/>
</dbReference>
<dbReference type="EMBL" id="AK028568">
    <property type="protein sequence ID" value="BAC26013.1"/>
    <property type="molecule type" value="mRNA"/>
</dbReference>
<dbReference type="EMBL" id="AK161225">
    <property type="protein sequence ID" value="BAE36249.1"/>
    <property type="molecule type" value="mRNA"/>
</dbReference>
<dbReference type="EMBL" id="BC069944">
    <property type="protein sequence ID" value="AAH69944.1"/>
    <property type="molecule type" value="mRNA"/>
</dbReference>
<dbReference type="CCDS" id="CCDS20024.1"/>
<dbReference type="RefSeq" id="NP_849204.1">
    <property type="nucleotide sequence ID" value="NM_178873.3"/>
</dbReference>
<dbReference type="BioGRID" id="208343">
    <property type="interactions" value="1"/>
</dbReference>
<dbReference type="FunCoup" id="Q6NSR3">
    <property type="interactions" value="777"/>
</dbReference>
<dbReference type="STRING" id="10090.ENSMUSP00000123563"/>
<dbReference type="iPTMnet" id="Q6NSR3"/>
<dbReference type="PhosphoSitePlus" id="Q6NSR3"/>
<dbReference type="PaxDb" id="10090-ENSMUSP00000123563"/>
<dbReference type="ProteomicsDB" id="285617"/>
<dbReference type="Pumba" id="Q6NSR3"/>
<dbReference type="DNASU" id="57869"/>
<dbReference type="GeneID" id="57869"/>
<dbReference type="KEGG" id="mmu:57869"/>
<dbReference type="UCSC" id="uc009bmb.1">
    <property type="organism name" value="mouse"/>
</dbReference>
<dbReference type="AGR" id="MGI:1889336"/>
<dbReference type="CTD" id="90956"/>
<dbReference type="MGI" id="MGI:1889336">
    <property type="gene designation" value="Adck2"/>
</dbReference>
<dbReference type="eggNOG" id="KOG1236">
    <property type="taxonomic scope" value="Eukaryota"/>
</dbReference>
<dbReference type="InParanoid" id="Q6NSR3"/>
<dbReference type="OrthoDB" id="427480at2759"/>
<dbReference type="TreeFam" id="TF315018"/>
<dbReference type="BioGRID-ORCS" id="57869">
    <property type="hits" value="3 hits in 80 CRISPR screens"/>
</dbReference>
<dbReference type="ChiTaRS" id="Adck2">
    <property type="organism name" value="mouse"/>
</dbReference>
<dbReference type="PRO" id="PR:Q6NSR3"/>
<dbReference type="Proteomes" id="UP000000589">
    <property type="component" value="Unplaced"/>
</dbReference>
<dbReference type="RNAct" id="Q6NSR3">
    <property type="molecule type" value="protein"/>
</dbReference>
<dbReference type="GO" id="GO:0016020">
    <property type="term" value="C:membrane"/>
    <property type="evidence" value="ECO:0007669"/>
    <property type="project" value="UniProtKB-SubCell"/>
</dbReference>
<dbReference type="GO" id="GO:0005739">
    <property type="term" value="C:mitochondrion"/>
    <property type="evidence" value="ECO:0000314"/>
    <property type="project" value="UniProtKB"/>
</dbReference>
<dbReference type="GO" id="GO:0005524">
    <property type="term" value="F:ATP binding"/>
    <property type="evidence" value="ECO:0007669"/>
    <property type="project" value="UniProtKB-KW"/>
</dbReference>
<dbReference type="GO" id="GO:0004674">
    <property type="term" value="F:protein serine/threonine kinase activity"/>
    <property type="evidence" value="ECO:0007669"/>
    <property type="project" value="UniProtKB-KW"/>
</dbReference>
<dbReference type="GO" id="GO:0010795">
    <property type="term" value="P:regulation of ubiquinone biosynthetic process"/>
    <property type="evidence" value="ECO:0000314"/>
    <property type="project" value="UniProtKB"/>
</dbReference>
<dbReference type="CDD" id="cd13971">
    <property type="entry name" value="ADCK2-like"/>
    <property type="match status" value="1"/>
</dbReference>
<dbReference type="InterPro" id="IPR004147">
    <property type="entry name" value="ABC1_dom"/>
</dbReference>
<dbReference type="InterPro" id="IPR044095">
    <property type="entry name" value="ADCK2_dom"/>
</dbReference>
<dbReference type="InterPro" id="IPR052402">
    <property type="entry name" value="ADCK_kinase"/>
</dbReference>
<dbReference type="InterPro" id="IPR011009">
    <property type="entry name" value="Kinase-like_dom_sf"/>
</dbReference>
<dbReference type="PANTHER" id="PTHR45890:SF1">
    <property type="entry name" value="AARF DOMAIN CONTAINING KINASE 2"/>
    <property type="match status" value="1"/>
</dbReference>
<dbReference type="PANTHER" id="PTHR45890">
    <property type="entry name" value="AARF DOMAIN CONTAINING KINASE 2 (PREDICTED)"/>
    <property type="match status" value="1"/>
</dbReference>
<dbReference type="Pfam" id="PF03109">
    <property type="entry name" value="ABC1"/>
    <property type="match status" value="1"/>
</dbReference>
<dbReference type="SUPFAM" id="SSF56112">
    <property type="entry name" value="Protein kinase-like (PK-like)"/>
    <property type="match status" value="1"/>
</dbReference>
<gene>
    <name type="primary">Adck2</name>
</gene>
<organism>
    <name type="scientific">Mus musculus</name>
    <name type="common">Mouse</name>
    <dbReference type="NCBI Taxonomy" id="10090"/>
    <lineage>
        <taxon>Eukaryota</taxon>
        <taxon>Metazoa</taxon>
        <taxon>Chordata</taxon>
        <taxon>Craniata</taxon>
        <taxon>Vertebrata</taxon>
        <taxon>Euteleostomi</taxon>
        <taxon>Mammalia</taxon>
        <taxon>Eutheria</taxon>
        <taxon>Euarchontoglires</taxon>
        <taxon>Glires</taxon>
        <taxon>Rodentia</taxon>
        <taxon>Myomorpha</taxon>
        <taxon>Muroidea</taxon>
        <taxon>Muridae</taxon>
        <taxon>Murinae</taxon>
        <taxon>Mus</taxon>
        <taxon>Mus</taxon>
    </lineage>
</organism>
<name>ADCK2_MOUSE</name>
<keyword id="KW-0067">ATP-binding</keyword>
<keyword id="KW-0418">Kinase</keyword>
<keyword id="KW-0472">Membrane</keyword>
<keyword id="KW-0496">Mitochondrion</keyword>
<keyword id="KW-0547">Nucleotide-binding</keyword>
<keyword id="KW-1185">Reference proteome</keyword>
<keyword id="KW-0723">Serine/threonine-protein kinase</keyword>
<keyword id="KW-0808">Transferase</keyword>
<keyword id="KW-0812">Transmembrane</keyword>
<keyword id="KW-1133">Transmembrane helix</keyword>
<protein>
    <recommendedName>
        <fullName>Uncharacterized aarF domain-containing protein kinase 2</fullName>
        <ecNumber>2.7.11.-</ecNumber>
    </recommendedName>
</protein>